<evidence type="ECO:0000255" key="1">
    <source>
        <dbReference type="HAMAP-Rule" id="MF_00008"/>
    </source>
</evidence>
<reference key="1">
    <citation type="journal article" date="2001" name="Nature">
        <title>Genome sequence of Yersinia pestis, the causative agent of plague.</title>
        <authorList>
            <person name="Parkhill J."/>
            <person name="Wren B.W."/>
            <person name="Thomson N.R."/>
            <person name="Titball R.W."/>
            <person name="Holden M.T.G."/>
            <person name="Prentice M.B."/>
            <person name="Sebaihia M."/>
            <person name="James K.D."/>
            <person name="Churcher C.M."/>
            <person name="Mungall K.L."/>
            <person name="Baker S."/>
            <person name="Basham D."/>
            <person name="Bentley S.D."/>
            <person name="Brooks K."/>
            <person name="Cerdeno-Tarraga A.-M."/>
            <person name="Chillingworth T."/>
            <person name="Cronin A."/>
            <person name="Davies R.M."/>
            <person name="Davis P."/>
            <person name="Dougan G."/>
            <person name="Feltwell T."/>
            <person name="Hamlin N."/>
            <person name="Holroyd S."/>
            <person name="Jagels K."/>
            <person name="Karlyshev A.V."/>
            <person name="Leather S."/>
            <person name="Moule S."/>
            <person name="Oyston P.C.F."/>
            <person name="Quail M.A."/>
            <person name="Rutherford K.M."/>
            <person name="Simmonds M."/>
            <person name="Skelton J."/>
            <person name="Stevens K."/>
            <person name="Whitehead S."/>
            <person name="Barrell B.G."/>
        </authorList>
    </citation>
    <scope>NUCLEOTIDE SEQUENCE [LARGE SCALE GENOMIC DNA]</scope>
    <source>
        <strain>CO-92 / Biovar Orientalis</strain>
    </source>
</reference>
<reference key="2">
    <citation type="journal article" date="2002" name="J. Bacteriol.">
        <title>Genome sequence of Yersinia pestis KIM.</title>
        <authorList>
            <person name="Deng W."/>
            <person name="Burland V."/>
            <person name="Plunkett G. III"/>
            <person name="Boutin A."/>
            <person name="Mayhew G.F."/>
            <person name="Liss P."/>
            <person name="Perna N.T."/>
            <person name="Rose D.J."/>
            <person name="Mau B."/>
            <person name="Zhou S."/>
            <person name="Schwartz D.C."/>
            <person name="Fetherston J.D."/>
            <person name="Lindler L.E."/>
            <person name="Brubaker R.R."/>
            <person name="Plano G.V."/>
            <person name="Straley S.C."/>
            <person name="McDonough K.A."/>
            <person name="Nilles M.L."/>
            <person name="Matson J.S."/>
            <person name="Blattner F.R."/>
            <person name="Perry R.D."/>
        </authorList>
    </citation>
    <scope>NUCLEOTIDE SEQUENCE [LARGE SCALE GENOMIC DNA]</scope>
    <source>
        <strain>KIM10+ / Biovar Mediaevalis</strain>
    </source>
</reference>
<reference key="3">
    <citation type="journal article" date="2004" name="DNA Res.">
        <title>Complete genome sequence of Yersinia pestis strain 91001, an isolate avirulent to humans.</title>
        <authorList>
            <person name="Song Y."/>
            <person name="Tong Z."/>
            <person name="Wang J."/>
            <person name="Wang L."/>
            <person name="Guo Z."/>
            <person name="Han Y."/>
            <person name="Zhang J."/>
            <person name="Pei D."/>
            <person name="Zhou D."/>
            <person name="Qin H."/>
            <person name="Pang X."/>
            <person name="Han Y."/>
            <person name="Zhai J."/>
            <person name="Li M."/>
            <person name="Cui B."/>
            <person name="Qi Z."/>
            <person name="Jin L."/>
            <person name="Dai R."/>
            <person name="Chen F."/>
            <person name="Li S."/>
            <person name="Ye C."/>
            <person name="Du Z."/>
            <person name="Lin W."/>
            <person name="Wang J."/>
            <person name="Yu J."/>
            <person name="Yang H."/>
            <person name="Wang J."/>
            <person name="Huang P."/>
            <person name="Yang R."/>
        </authorList>
    </citation>
    <scope>NUCLEOTIDE SEQUENCE [LARGE SCALE GENOMIC DNA]</scope>
    <source>
        <strain>91001 / Biovar Mediaevalis</strain>
    </source>
</reference>
<proteinExistence type="inferred from homology"/>
<keyword id="KW-0963">Cytoplasm</keyword>
<keyword id="KW-0489">Methyltransferase</keyword>
<keyword id="KW-0545">Nucleotide biosynthesis</keyword>
<keyword id="KW-1185">Reference proteome</keyword>
<keyword id="KW-0808">Transferase</keyword>
<feature type="chain" id="PRO_0000141051" description="Thymidylate synthase">
    <location>
        <begin position="1"/>
        <end position="264"/>
    </location>
</feature>
<feature type="active site" description="Nucleophile" evidence="1">
    <location>
        <position position="146"/>
    </location>
</feature>
<feature type="binding site" description="in other chain" evidence="1">
    <location>
        <position position="21"/>
    </location>
    <ligand>
        <name>dUMP</name>
        <dbReference type="ChEBI" id="CHEBI:246422"/>
        <note>ligand shared between dimeric partners</note>
    </ligand>
</feature>
<feature type="binding site" evidence="1">
    <location>
        <position position="51"/>
    </location>
    <ligand>
        <name>(6R)-5,10-methylene-5,6,7,8-tetrahydrofolate</name>
        <dbReference type="ChEBI" id="CHEBI:15636"/>
    </ligand>
</feature>
<feature type="binding site" evidence="1">
    <location>
        <begin position="126"/>
        <end position="127"/>
    </location>
    <ligand>
        <name>dUMP</name>
        <dbReference type="ChEBI" id="CHEBI:246422"/>
        <note>ligand shared between dimeric partners</note>
    </ligand>
</feature>
<feature type="binding site" description="in other chain" evidence="1">
    <location>
        <begin position="166"/>
        <end position="169"/>
    </location>
    <ligand>
        <name>dUMP</name>
        <dbReference type="ChEBI" id="CHEBI:246422"/>
        <note>ligand shared between dimeric partners</note>
    </ligand>
</feature>
<feature type="binding site" evidence="1">
    <location>
        <position position="169"/>
    </location>
    <ligand>
        <name>(6R)-5,10-methylene-5,6,7,8-tetrahydrofolate</name>
        <dbReference type="ChEBI" id="CHEBI:15636"/>
    </ligand>
</feature>
<feature type="binding site" description="in other chain" evidence="1">
    <location>
        <position position="177"/>
    </location>
    <ligand>
        <name>dUMP</name>
        <dbReference type="ChEBI" id="CHEBI:246422"/>
        <note>ligand shared between dimeric partners</note>
    </ligand>
</feature>
<feature type="binding site" description="in other chain" evidence="1">
    <location>
        <begin position="207"/>
        <end position="209"/>
    </location>
    <ligand>
        <name>dUMP</name>
        <dbReference type="ChEBI" id="CHEBI:246422"/>
        <note>ligand shared between dimeric partners</note>
    </ligand>
</feature>
<feature type="binding site" evidence="1">
    <location>
        <position position="263"/>
    </location>
    <ligand>
        <name>(6R)-5,10-methylene-5,6,7,8-tetrahydrofolate</name>
        <dbReference type="ChEBI" id="CHEBI:15636"/>
    </ligand>
</feature>
<organism>
    <name type="scientific">Yersinia pestis</name>
    <dbReference type="NCBI Taxonomy" id="632"/>
    <lineage>
        <taxon>Bacteria</taxon>
        <taxon>Pseudomonadati</taxon>
        <taxon>Pseudomonadota</taxon>
        <taxon>Gammaproteobacteria</taxon>
        <taxon>Enterobacterales</taxon>
        <taxon>Yersiniaceae</taxon>
        <taxon>Yersinia</taxon>
    </lineage>
</organism>
<gene>
    <name evidence="1" type="primary">thyA</name>
    <name type="ordered locus">YPO0783</name>
    <name type="ordered locus">y3171</name>
    <name type="ordered locus">YP_2875</name>
</gene>
<comment type="function">
    <text evidence="1">Catalyzes the reductive methylation of 2'-deoxyuridine-5'-monophosphate (dUMP) to 2'-deoxythymidine-5'-monophosphate (dTMP) while utilizing 5,10-methylenetetrahydrofolate (mTHF) as the methyl donor and reductant in the reaction, yielding dihydrofolate (DHF) as a by-product. This enzymatic reaction provides an intracellular de novo source of dTMP, an essential precursor for DNA biosynthesis.</text>
</comment>
<comment type="catalytic activity">
    <reaction evidence="1">
        <text>dUMP + (6R)-5,10-methylene-5,6,7,8-tetrahydrofolate = 7,8-dihydrofolate + dTMP</text>
        <dbReference type="Rhea" id="RHEA:12104"/>
        <dbReference type="ChEBI" id="CHEBI:15636"/>
        <dbReference type="ChEBI" id="CHEBI:57451"/>
        <dbReference type="ChEBI" id="CHEBI:63528"/>
        <dbReference type="ChEBI" id="CHEBI:246422"/>
        <dbReference type="EC" id="2.1.1.45"/>
    </reaction>
</comment>
<comment type="pathway">
    <text evidence="1">Pyrimidine metabolism; dTTP biosynthesis.</text>
</comment>
<comment type="subunit">
    <text evidence="1">Homodimer.</text>
</comment>
<comment type="subcellular location">
    <subcellularLocation>
        <location evidence="1">Cytoplasm</location>
    </subcellularLocation>
</comment>
<comment type="similarity">
    <text evidence="1">Belongs to the thymidylate synthase family. Bacterial-type ThyA subfamily.</text>
</comment>
<accession>Q8ZHV1</accession>
<accession>Q0WIQ0</accession>
<name>TYSY_YERPE</name>
<sequence length="264" mass="30111">MKQYLDLMKKVLEEGTPKADRTGTGTLSIFGHQMRFNLQDGFPLVTTKRCHLRSIIHELLWFLNGDTNIAYLKENNVSIWDEWADENGDLGPIYGKQWRAWGAADGRKIDQLSNVVNQLKQDPDSRRIIVSAWNVGELDQMALAPCHAFFQFYVADGKLSCQLYQRSCDVFLGLPFNIASYALLVHMMAQQCDLAVGDFVWTGGDTHLYSNHIDQAHLQLSREPRVLPKLVIKRKPDSLFDYHFDDFDIEGYDPHPGIKAPIAI</sequence>
<dbReference type="EC" id="2.1.1.45" evidence="1"/>
<dbReference type="EMBL" id="AL590842">
    <property type="protein sequence ID" value="CAL19455.1"/>
    <property type="molecule type" value="Genomic_DNA"/>
</dbReference>
<dbReference type="EMBL" id="AE009952">
    <property type="protein sequence ID" value="AAM86721.1"/>
    <property type="molecule type" value="Genomic_DNA"/>
</dbReference>
<dbReference type="EMBL" id="AE017042">
    <property type="protein sequence ID" value="AAS63057.1"/>
    <property type="molecule type" value="Genomic_DNA"/>
</dbReference>
<dbReference type="PIR" id="AE0096">
    <property type="entry name" value="AE0096"/>
</dbReference>
<dbReference type="RefSeq" id="WP_002211384.1">
    <property type="nucleotide sequence ID" value="NZ_WUCM01000007.1"/>
</dbReference>
<dbReference type="RefSeq" id="YP_002345838.1">
    <property type="nucleotide sequence ID" value="NC_003143.1"/>
</dbReference>
<dbReference type="SMR" id="Q8ZHV1"/>
<dbReference type="STRING" id="214092.YPO0783"/>
<dbReference type="PaxDb" id="214092-YPO0783"/>
<dbReference type="DNASU" id="1148118"/>
<dbReference type="EnsemblBacteria" id="AAS63057">
    <property type="protein sequence ID" value="AAS63057"/>
    <property type="gene ID" value="YP_2875"/>
</dbReference>
<dbReference type="GeneID" id="57973851"/>
<dbReference type="KEGG" id="ype:YPO0783"/>
<dbReference type="KEGG" id="ypk:y3171"/>
<dbReference type="KEGG" id="ypm:YP_2875"/>
<dbReference type="PATRIC" id="fig|214092.21.peg.1046"/>
<dbReference type="eggNOG" id="COG0207">
    <property type="taxonomic scope" value="Bacteria"/>
</dbReference>
<dbReference type="HOGENOM" id="CLU_021669_0_0_6"/>
<dbReference type="OMA" id="AYGRFWR"/>
<dbReference type="OrthoDB" id="9774633at2"/>
<dbReference type="UniPathway" id="UPA00575"/>
<dbReference type="Proteomes" id="UP000000815">
    <property type="component" value="Chromosome"/>
</dbReference>
<dbReference type="Proteomes" id="UP000001019">
    <property type="component" value="Chromosome"/>
</dbReference>
<dbReference type="Proteomes" id="UP000002490">
    <property type="component" value="Chromosome"/>
</dbReference>
<dbReference type="GO" id="GO:0005829">
    <property type="term" value="C:cytosol"/>
    <property type="evidence" value="ECO:0000318"/>
    <property type="project" value="GO_Central"/>
</dbReference>
<dbReference type="GO" id="GO:0004799">
    <property type="term" value="F:thymidylate synthase activity"/>
    <property type="evidence" value="ECO:0000318"/>
    <property type="project" value="GO_Central"/>
</dbReference>
<dbReference type="GO" id="GO:0006231">
    <property type="term" value="P:dTMP biosynthetic process"/>
    <property type="evidence" value="ECO:0000318"/>
    <property type="project" value="GO_Central"/>
</dbReference>
<dbReference type="GO" id="GO:0006235">
    <property type="term" value="P:dTTP biosynthetic process"/>
    <property type="evidence" value="ECO:0007669"/>
    <property type="project" value="UniProtKB-UniRule"/>
</dbReference>
<dbReference type="GO" id="GO:0032259">
    <property type="term" value="P:methylation"/>
    <property type="evidence" value="ECO:0007669"/>
    <property type="project" value="UniProtKB-KW"/>
</dbReference>
<dbReference type="CDD" id="cd00351">
    <property type="entry name" value="TS_Pyrimidine_HMase"/>
    <property type="match status" value="1"/>
</dbReference>
<dbReference type="FunFam" id="3.30.572.10:FF:000001">
    <property type="entry name" value="Thymidylate synthase"/>
    <property type="match status" value="1"/>
</dbReference>
<dbReference type="Gene3D" id="3.30.572.10">
    <property type="entry name" value="Thymidylate synthase/dCMP hydroxymethylase domain"/>
    <property type="match status" value="1"/>
</dbReference>
<dbReference type="HAMAP" id="MF_00008">
    <property type="entry name" value="Thymidy_synth_bact"/>
    <property type="match status" value="1"/>
</dbReference>
<dbReference type="InterPro" id="IPR045097">
    <property type="entry name" value="Thymidate_synth/dCMP_Mease"/>
</dbReference>
<dbReference type="InterPro" id="IPR023451">
    <property type="entry name" value="Thymidate_synth/dCMP_Mease_dom"/>
</dbReference>
<dbReference type="InterPro" id="IPR036926">
    <property type="entry name" value="Thymidate_synth/dCMP_Mease_sf"/>
</dbReference>
<dbReference type="InterPro" id="IPR000398">
    <property type="entry name" value="Thymidylate_synthase"/>
</dbReference>
<dbReference type="InterPro" id="IPR020940">
    <property type="entry name" value="Thymidylate_synthase_AS"/>
</dbReference>
<dbReference type="NCBIfam" id="NF002497">
    <property type="entry name" value="PRK01827.1-3"/>
    <property type="match status" value="1"/>
</dbReference>
<dbReference type="NCBIfam" id="NF002499">
    <property type="entry name" value="PRK01827.1-5"/>
    <property type="match status" value="1"/>
</dbReference>
<dbReference type="NCBIfam" id="TIGR03284">
    <property type="entry name" value="thym_sym"/>
    <property type="match status" value="2"/>
</dbReference>
<dbReference type="PANTHER" id="PTHR11548:SF9">
    <property type="entry name" value="THYMIDYLATE SYNTHASE"/>
    <property type="match status" value="1"/>
</dbReference>
<dbReference type="PANTHER" id="PTHR11548">
    <property type="entry name" value="THYMIDYLATE SYNTHASE 1"/>
    <property type="match status" value="1"/>
</dbReference>
<dbReference type="Pfam" id="PF00303">
    <property type="entry name" value="Thymidylat_synt"/>
    <property type="match status" value="1"/>
</dbReference>
<dbReference type="PRINTS" id="PR00108">
    <property type="entry name" value="THYMDSNTHASE"/>
</dbReference>
<dbReference type="SUPFAM" id="SSF55831">
    <property type="entry name" value="Thymidylate synthase/dCMP hydroxymethylase"/>
    <property type="match status" value="1"/>
</dbReference>
<dbReference type="PROSITE" id="PS00091">
    <property type="entry name" value="THYMIDYLATE_SYNTHASE"/>
    <property type="match status" value="1"/>
</dbReference>
<protein>
    <recommendedName>
        <fullName evidence="1">Thymidylate synthase</fullName>
        <shortName evidence="1">TS</shortName>
        <shortName evidence="1">TSase</shortName>
        <ecNumber evidence="1">2.1.1.45</ecNumber>
    </recommendedName>
</protein>